<keyword id="KW-0472">Membrane</keyword>
<keyword id="KW-1185">Reference proteome</keyword>
<keyword id="KW-0812">Transmembrane</keyword>
<keyword id="KW-1133">Transmembrane helix</keyword>
<comment type="subcellular location">
    <subcellularLocation>
        <location evidence="2">Membrane</location>
        <topology evidence="2">Single-pass membrane protein</topology>
    </subcellularLocation>
</comment>
<sequence length="119" mass="13664">MPTSSNDLYQTRLDVQTPNRWFLYISLELFNNMYSPFRSSSVLLSGAQSDIPKVGKCLFLPCRSLEFRASANSLSVHFLLNVISAILSMLIERYAVEVIMSKITWPRSNEDWRFHGIKG</sequence>
<name>YQEJ_SCHPO</name>
<evidence type="ECO:0000255" key="1"/>
<evidence type="ECO:0000305" key="2"/>
<accession>Q9C0V2</accession>
<dbReference type="EMBL" id="CU329672">
    <property type="protein sequence ID" value="CAC37433.1"/>
    <property type="molecule type" value="Genomic_DNA"/>
</dbReference>
<dbReference type="RefSeq" id="NP_588428.1">
    <property type="nucleotide sequence ID" value="NM_001023419.1"/>
</dbReference>
<dbReference type="PaxDb" id="4896-SPCC576.19c.1"/>
<dbReference type="EnsemblFungi" id="SPCC576.19c.1">
    <property type="protein sequence ID" value="SPCC576.19c.1:pep"/>
    <property type="gene ID" value="SPCC576.19c"/>
</dbReference>
<dbReference type="KEGG" id="spo:2539025"/>
<dbReference type="PomBase" id="SPCC576.19c"/>
<dbReference type="VEuPathDB" id="FungiDB:SPCC576.19c"/>
<dbReference type="HOGENOM" id="CLU_2062828_0_0_1"/>
<dbReference type="InParanoid" id="Q9C0V2"/>
<dbReference type="PRO" id="PR:Q9C0V2"/>
<dbReference type="Proteomes" id="UP000002485">
    <property type="component" value="Chromosome III"/>
</dbReference>
<dbReference type="GO" id="GO:0016020">
    <property type="term" value="C:membrane"/>
    <property type="evidence" value="ECO:0007669"/>
    <property type="project" value="UniProtKB-SubCell"/>
</dbReference>
<gene>
    <name type="ORF">SPCC576.19c</name>
</gene>
<protein>
    <recommendedName>
        <fullName>Putative uncharacterized protein C576.19c</fullName>
    </recommendedName>
</protein>
<proteinExistence type="predicted"/>
<organism>
    <name type="scientific">Schizosaccharomyces pombe (strain 972 / ATCC 24843)</name>
    <name type="common">Fission yeast</name>
    <dbReference type="NCBI Taxonomy" id="284812"/>
    <lineage>
        <taxon>Eukaryota</taxon>
        <taxon>Fungi</taxon>
        <taxon>Dikarya</taxon>
        <taxon>Ascomycota</taxon>
        <taxon>Taphrinomycotina</taxon>
        <taxon>Schizosaccharomycetes</taxon>
        <taxon>Schizosaccharomycetales</taxon>
        <taxon>Schizosaccharomycetaceae</taxon>
        <taxon>Schizosaccharomyces</taxon>
    </lineage>
</organism>
<reference key="1">
    <citation type="journal article" date="2002" name="Nature">
        <title>The genome sequence of Schizosaccharomyces pombe.</title>
        <authorList>
            <person name="Wood V."/>
            <person name="Gwilliam R."/>
            <person name="Rajandream M.A."/>
            <person name="Lyne M.H."/>
            <person name="Lyne R."/>
            <person name="Stewart A."/>
            <person name="Sgouros J.G."/>
            <person name="Peat N."/>
            <person name="Hayles J."/>
            <person name="Baker S.G."/>
            <person name="Basham D."/>
            <person name="Bowman S."/>
            <person name="Brooks K."/>
            <person name="Brown D."/>
            <person name="Brown S."/>
            <person name="Chillingworth T."/>
            <person name="Churcher C.M."/>
            <person name="Collins M."/>
            <person name="Connor R."/>
            <person name="Cronin A."/>
            <person name="Davis P."/>
            <person name="Feltwell T."/>
            <person name="Fraser A."/>
            <person name="Gentles S."/>
            <person name="Goble A."/>
            <person name="Hamlin N."/>
            <person name="Harris D.E."/>
            <person name="Hidalgo J."/>
            <person name="Hodgson G."/>
            <person name="Holroyd S."/>
            <person name="Hornsby T."/>
            <person name="Howarth S."/>
            <person name="Huckle E.J."/>
            <person name="Hunt S."/>
            <person name="Jagels K."/>
            <person name="James K.D."/>
            <person name="Jones L."/>
            <person name="Jones M."/>
            <person name="Leather S."/>
            <person name="McDonald S."/>
            <person name="McLean J."/>
            <person name="Mooney P."/>
            <person name="Moule S."/>
            <person name="Mungall K.L."/>
            <person name="Murphy L.D."/>
            <person name="Niblett D."/>
            <person name="Odell C."/>
            <person name="Oliver K."/>
            <person name="O'Neil S."/>
            <person name="Pearson D."/>
            <person name="Quail M.A."/>
            <person name="Rabbinowitsch E."/>
            <person name="Rutherford K.M."/>
            <person name="Rutter S."/>
            <person name="Saunders D."/>
            <person name="Seeger K."/>
            <person name="Sharp S."/>
            <person name="Skelton J."/>
            <person name="Simmonds M.N."/>
            <person name="Squares R."/>
            <person name="Squares S."/>
            <person name="Stevens K."/>
            <person name="Taylor K."/>
            <person name="Taylor R.G."/>
            <person name="Tivey A."/>
            <person name="Walsh S.V."/>
            <person name="Warren T."/>
            <person name="Whitehead S."/>
            <person name="Woodward J.R."/>
            <person name="Volckaert G."/>
            <person name="Aert R."/>
            <person name="Robben J."/>
            <person name="Grymonprez B."/>
            <person name="Weltjens I."/>
            <person name="Vanstreels E."/>
            <person name="Rieger M."/>
            <person name="Schaefer M."/>
            <person name="Mueller-Auer S."/>
            <person name="Gabel C."/>
            <person name="Fuchs M."/>
            <person name="Duesterhoeft A."/>
            <person name="Fritzc C."/>
            <person name="Holzer E."/>
            <person name="Moestl D."/>
            <person name="Hilbert H."/>
            <person name="Borzym K."/>
            <person name="Langer I."/>
            <person name="Beck A."/>
            <person name="Lehrach H."/>
            <person name="Reinhardt R."/>
            <person name="Pohl T.M."/>
            <person name="Eger P."/>
            <person name="Zimmermann W."/>
            <person name="Wedler H."/>
            <person name="Wambutt R."/>
            <person name="Purnelle B."/>
            <person name="Goffeau A."/>
            <person name="Cadieu E."/>
            <person name="Dreano S."/>
            <person name="Gloux S."/>
            <person name="Lelaure V."/>
            <person name="Mottier S."/>
            <person name="Galibert F."/>
            <person name="Aves S.J."/>
            <person name="Xiang Z."/>
            <person name="Hunt C."/>
            <person name="Moore K."/>
            <person name="Hurst S.M."/>
            <person name="Lucas M."/>
            <person name="Rochet M."/>
            <person name="Gaillardin C."/>
            <person name="Tallada V.A."/>
            <person name="Garzon A."/>
            <person name="Thode G."/>
            <person name="Daga R.R."/>
            <person name="Cruzado L."/>
            <person name="Jimenez J."/>
            <person name="Sanchez M."/>
            <person name="del Rey F."/>
            <person name="Benito J."/>
            <person name="Dominguez A."/>
            <person name="Revuelta J.L."/>
            <person name="Moreno S."/>
            <person name="Armstrong J."/>
            <person name="Forsburg S.L."/>
            <person name="Cerutti L."/>
            <person name="Lowe T."/>
            <person name="McCombie W.R."/>
            <person name="Paulsen I."/>
            <person name="Potashkin J."/>
            <person name="Shpakovski G.V."/>
            <person name="Ussery D."/>
            <person name="Barrell B.G."/>
            <person name="Nurse P."/>
        </authorList>
    </citation>
    <scope>NUCLEOTIDE SEQUENCE [LARGE SCALE GENOMIC DNA]</scope>
    <source>
        <strain>972 / ATCC 24843</strain>
    </source>
</reference>
<feature type="chain" id="PRO_0000303974" description="Putative uncharacterized protein C576.19c">
    <location>
        <begin position="1"/>
        <end position="119"/>
    </location>
</feature>
<feature type="transmembrane region" description="Helical" evidence="1">
    <location>
        <begin position="74"/>
        <end position="91"/>
    </location>
</feature>